<organism>
    <name type="scientific">Halalkalibacterium halodurans (strain ATCC BAA-125 / DSM 18197 / FERM 7344 / JCM 9153 / C-125)</name>
    <name type="common">Bacillus halodurans</name>
    <dbReference type="NCBI Taxonomy" id="272558"/>
    <lineage>
        <taxon>Bacteria</taxon>
        <taxon>Bacillati</taxon>
        <taxon>Bacillota</taxon>
        <taxon>Bacilli</taxon>
        <taxon>Bacillales</taxon>
        <taxon>Bacillaceae</taxon>
        <taxon>Halalkalibacterium (ex Joshi et al. 2022)</taxon>
    </lineage>
</organism>
<sequence>MELGKQRPVVYVVSDSVGETAELVVKAAASQFSGAGIEVRRIPYVEDKETVDEVIQLAKQADAIIAFTLVVPGIRTYLLEKATEAKVETVDIIGPMLEKISSLTKEEPRYEPGIVYRLDEDYFRKVEAIEFAVKYDDGRDPRGIVRADLVLIGVSRTSKTPLSQYLAHKRLKVANVPLVPEVEPPEELFKLSPKKVIGLKISPEQLNGIRAERLKTLGLKSQANYANIDRIKEELAYAEGIMKRIGCPVIDVSNKAVEETANLISSMFQK</sequence>
<reference key="1">
    <citation type="journal article" date="2000" name="Nucleic Acids Res.">
        <title>Complete genome sequence of the alkaliphilic bacterium Bacillus halodurans and genomic sequence comparison with Bacillus subtilis.</title>
        <authorList>
            <person name="Takami H."/>
            <person name="Nakasone K."/>
            <person name="Takaki Y."/>
            <person name="Maeno G."/>
            <person name="Sasaki R."/>
            <person name="Masui N."/>
            <person name="Fuji F."/>
            <person name="Hirama C."/>
            <person name="Nakamura Y."/>
            <person name="Ogasawara N."/>
            <person name="Kuhara S."/>
            <person name="Horikoshi K."/>
        </authorList>
    </citation>
    <scope>NUCLEOTIDE SEQUENCE [LARGE SCALE GENOMIC DNA]</scope>
    <source>
        <strain>ATCC BAA-125 / DSM 18197 / FERM 7344 / JCM 9153 / C-125</strain>
    </source>
</reference>
<comment type="function">
    <text evidence="1">Bifunctional serine/threonine kinase and phosphorylase involved in the regulation of the pyruvate, phosphate dikinase (PPDK) by catalyzing its phosphorylation/dephosphorylation.</text>
</comment>
<comment type="catalytic activity">
    <reaction evidence="1">
        <text>N(tele)-phospho-L-histidyl/L-threonyl-[pyruvate, phosphate dikinase] + ADP = N(tele)-phospho-L-histidyl/O-phospho-L-threonyl-[pyruvate, phosphate dikinase] + AMP + H(+)</text>
        <dbReference type="Rhea" id="RHEA:43692"/>
        <dbReference type="Rhea" id="RHEA-COMP:10650"/>
        <dbReference type="Rhea" id="RHEA-COMP:10651"/>
        <dbReference type="ChEBI" id="CHEBI:15378"/>
        <dbReference type="ChEBI" id="CHEBI:30013"/>
        <dbReference type="ChEBI" id="CHEBI:61977"/>
        <dbReference type="ChEBI" id="CHEBI:83586"/>
        <dbReference type="ChEBI" id="CHEBI:456215"/>
        <dbReference type="ChEBI" id="CHEBI:456216"/>
        <dbReference type="EC" id="2.7.11.32"/>
    </reaction>
</comment>
<comment type="catalytic activity">
    <reaction evidence="1">
        <text>N(tele)-phospho-L-histidyl/O-phospho-L-threonyl-[pyruvate, phosphate dikinase] + phosphate + H(+) = N(tele)-phospho-L-histidyl/L-threonyl-[pyruvate, phosphate dikinase] + diphosphate</text>
        <dbReference type="Rhea" id="RHEA:43696"/>
        <dbReference type="Rhea" id="RHEA-COMP:10650"/>
        <dbReference type="Rhea" id="RHEA-COMP:10651"/>
        <dbReference type="ChEBI" id="CHEBI:15378"/>
        <dbReference type="ChEBI" id="CHEBI:30013"/>
        <dbReference type="ChEBI" id="CHEBI:33019"/>
        <dbReference type="ChEBI" id="CHEBI:43474"/>
        <dbReference type="ChEBI" id="CHEBI:61977"/>
        <dbReference type="ChEBI" id="CHEBI:83586"/>
        <dbReference type="EC" id="2.7.4.27"/>
    </reaction>
</comment>
<comment type="similarity">
    <text evidence="1">Belongs to the pyruvate, phosphate/water dikinase regulatory protein family. PDRP subfamily.</text>
</comment>
<feature type="chain" id="PRO_0000196628" description="Putative pyruvate, phosphate dikinase regulatory protein">
    <location>
        <begin position="1"/>
        <end position="270"/>
    </location>
</feature>
<feature type="binding site" evidence="1">
    <location>
        <begin position="153"/>
        <end position="160"/>
    </location>
    <ligand>
        <name>ADP</name>
        <dbReference type="ChEBI" id="CHEBI:456216"/>
    </ligand>
</feature>
<evidence type="ECO:0000255" key="1">
    <source>
        <dbReference type="HAMAP-Rule" id="MF_00921"/>
    </source>
</evidence>
<proteinExistence type="inferred from homology"/>
<name>PDRP_HALH5</name>
<dbReference type="EC" id="2.7.11.32" evidence="1"/>
<dbReference type="EC" id="2.7.4.27" evidence="1"/>
<dbReference type="EMBL" id="BA000004">
    <property type="protein sequence ID" value="BAB05092.1"/>
    <property type="molecule type" value="Genomic_DNA"/>
</dbReference>
<dbReference type="PIR" id="E83821">
    <property type="entry name" value="E83821"/>
</dbReference>
<dbReference type="RefSeq" id="WP_010897538.1">
    <property type="nucleotide sequence ID" value="NC_002570.2"/>
</dbReference>
<dbReference type="SMR" id="Q9KD46"/>
<dbReference type="STRING" id="272558.gene:10727267"/>
<dbReference type="GeneID" id="87596993"/>
<dbReference type="KEGG" id="bha:BH1373"/>
<dbReference type="eggNOG" id="COG1806">
    <property type="taxonomic scope" value="Bacteria"/>
</dbReference>
<dbReference type="HOGENOM" id="CLU_046206_2_1_9"/>
<dbReference type="OrthoDB" id="9782201at2"/>
<dbReference type="Proteomes" id="UP000001258">
    <property type="component" value="Chromosome"/>
</dbReference>
<dbReference type="GO" id="GO:0043531">
    <property type="term" value="F:ADP binding"/>
    <property type="evidence" value="ECO:0007669"/>
    <property type="project" value="UniProtKB-UniRule"/>
</dbReference>
<dbReference type="GO" id="GO:0005524">
    <property type="term" value="F:ATP binding"/>
    <property type="evidence" value="ECO:0007669"/>
    <property type="project" value="InterPro"/>
</dbReference>
<dbReference type="GO" id="GO:0016776">
    <property type="term" value="F:phosphotransferase activity, phosphate group as acceptor"/>
    <property type="evidence" value="ECO:0007669"/>
    <property type="project" value="UniProtKB-UniRule"/>
</dbReference>
<dbReference type="GO" id="GO:0004674">
    <property type="term" value="F:protein serine/threonine kinase activity"/>
    <property type="evidence" value="ECO:0007669"/>
    <property type="project" value="UniProtKB-UniRule"/>
</dbReference>
<dbReference type="HAMAP" id="MF_00921">
    <property type="entry name" value="PDRP"/>
    <property type="match status" value="1"/>
</dbReference>
<dbReference type="InterPro" id="IPR005177">
    <property type="entry name" value="Kinase-pyrophosphorylase"/>
</dbReference>
<dbReference type="InterPro" id="IPR026565">
    <property type="entry name" value="PPDK_reg"/>
</dbReference>
<dbReference type="NCBIfam" id="NF003742">
    <property type="entry name" value="PRK05339.1"/>
    <property type="match status" value="1"/>
</dbReference>
<dbReference type="PANTHER" id="PTHR31756">
    <property type="entry name" value="PYRUVATE, PHOSPHATE DIKINASE REGULATORY PROTEIN 1, CHLOROPLASTIC"/>
    <property type="match status" value="1"/>
</dbReference>
<dbReference type="PANTHER" id="PTHR31756:SF3">
    <property type="entry name" value="PYRUVATE, PHOSPHATE DIKINASE REGULATORY PROTEIN 1, CHLOROPLASTIC"/>
    <property type="match status" value="1"/>
</dbReference>
<dbReference type="Pfam" id="PF03618">
    <property type="entry name" value="Kinase-PPPase"/>
    <property type="match status" value="1"/>
</dbReference>
<keyword id="KW-0418">Kinase</keyword>
<keyword id="KW-0547">Nucleotide-binding</keyword>
<keyword id="KW-1185">Reference proteome</keyword>
<keyword id="KW-0723">Serine/threonine-protein kinase</keyword>
<keyword id="KW-0808">Transferase</keyword>
<accession>Q9KD46</accession>
<gene>
    <name type="ordered locus">BH1373</name>
</gene>
<protein>
    <recommendedName>
        <fullName evidence="1">Putative pyruvate, phosphate dikinase regulatory protein</fullName>
        <shortName evidence="1">PPDK regulatory protein</shortName>
        <ecNumber evidence="1">2.7.11.32</ecNumber>
        <ecNumber evidence="1">2.7.4.27</ecNumber>
    </recommendedName>
</protein>